<organism evidence="8">
    <name type="scientific">Caenorhabditis elegans</name>
    <dbReference type="NCBI Taxonomy" id="6239"/>
    <lineage>
        <taxon>Eukaryota</taxon>
        <taxon>Metazoa</taxon>
        <taxon>Ecdysozoa</taxon>
        <taxon>Nematoda</taxon>
        <taxon>Chromadorea</taxon>
        <taxon>Rhabditida</taxon>
        <taxon>Rhabditina</taxon>
        <taxon>Rhabditomorpha</taxon>
        <taxon>Rhabditoidea</taxon>
        <taxon>Rhabditidae</taxon>
        <taxon>Peloderinae</taxon>
        <taxon>Caenorhabditis</taxon>
    </lineage>
</organism>
<keyword id="KW-0072">Autophagy</keyword>
<keyword id="KW-0325">Glycoprotein</keyword>
<keyword id="KW-0472">Membrane</keyword>
<keyword id="KW-0496">Mitochondrion</keyword>
<keyword id="KW-1000">Mitochondrion outer membrane</keyword>
<keyword id="KW-1185">Reference proteome</keyword>
<keyword id="KW-0812">Transmembrane</keyword>
<keyword id="KW-1133">Transmembrane helix</keyword>
<reference evidence="8" key="1">
    <citation type="journal article" date="1998" name="Science">
        <title>Genome sequence of the nematode C. elegans: a platform for investigating biology.</title>
        <authorList>
            <consortium name="The C. elegans sequencing consortium"/>
        </authorList>
    </citation>
    <scope>NUCLEOTIDE SEQUENCE [LARGE SCALE GENOMIC DNA]</scope>
    <source>
        <strain evidence="8">Bristol N2</strain>
    </source>
</reference>
<reference evidence="6" key="2">
    <citation type="journal article" date="2019" name="Dev. Biol.">
        <title>Fndc-1 contributes to paternal mitochondria elimination in C. elegans.</title>
        <authorList>
            <person name="Lim Y."/>
            <person name="Rubio-Pena K."/>
            <person name="Sobraske P.J."/>
            <person name="Molina P.A."/>
            <person name="Brookes P.S."/>
            <person name="Galy V."/>
            <person name="Nehrke K."/>
        </authorList>
    </citation>
    <scope>FUNCTION</scope>
    <scope>SUBCELLULAR LOCATION</scope>
    <scope>TISSUE SPECIFICITY</scope>
</reference>
<reference evidence="6" key="3">
    <citation type="journal article" date="2019" name="Dev. Biol.">
        <title>Ubiquitination is required for the initial removal of paternal organelles in C. elegans.</title>
        <authorList>
            <person name="Molina P."/>
            <person name="Lim Y."/>
            <person name="Boyd L."/>
        </authorList>
    </citation>
    <scope>FUNCTION</scope>
</reference>
<sequence length="138" mass="14697">MVDLSKNDGGSGKAGKGVSDAIDTVLYYVVDLKKQQPMVQLGVGAGFGTVTGYFVTKGGRLVAATVGISFLLAQFAIHKGYITLNESKIERDMKNLHKSVMNKVSGKKVINISDSFVSEYRWILGGFAAGMLIGFSVA</sequence>
<gene>
    <name evidence="5 9" type="primary">fndc-1</name>
    <name evidence="9" type="ORF">T06D8.7</name>
</gene>
<protein>
    <recommendedName>
        <fullName evidence="6">FUN14 domain-containing protein fndc-1</fullName>
    </recommendedName>
</protein>
<comment type="function">
    <text evidence="3 4">Mitophagy receptor which plays a role in paternal mitochondria degradation in embryos after the two-cell stage.</text>
</comment>
<comment type="subcellular location">
    <subcellularLocation>
        <location evidence="7">Mitochondrion outer membrane</location>
        <topology evidence="1">Multi-pass membrane protein</topology>
    </subcellularLocation>
</comment>
<comment type="tissue specificity">
    <text evidence="4">Broadly expressed in somatic tissues (PubMed:31233739). Expressed in the hermaphrodite spermatheca and male gonad (PubMed:31233739). Expressed in spermatids, but not expressed in oocytes (PubMed:31233739).</text>
</comment>
<comment type="similarity">
    <text evidence="6">Belongs to the FUN14 family.</text>
</comment>
<name>FNDC1_CAEEL</name>
<proteinExistence type="evidence at transcript level"/>
<accession>Q22252</accession>
<feature type="chain" id="PRO_0000448277" description="FUN14 domain-containing protein fndc-1">
    <location>
        <begin position="1"/>
        <end position="138"/>
    </location>
</feature>
<feature type="transmembrane region" description="Helical" evidence="1">
    <location>
        <begin position="37"/>
        <end position="56"/>
    </location>
</feature>
<feature type="transmembrane region" description="Helical" evidence="1">
    <location>
        <begin position="61"/>
        <end position="78"/>
    </location>
</feature>
<feature type="glycosylation site" description="N-linked (GlcNAc...) asparagine" evidence="2">
    <location>
        <position position="85"/>
    </location>
</feature>
<feature type="glycosylation site" description="N-linked (GlcNAc...) asparagine" evidence="2">
    <location>
        <position position="111"/>
    </location>
</feature>
<evidence type="ECO:0000255" key="1"/>
<evidence type="ECO:0000255" key="2">
    <source>
        <dbReference type="PROSITE-ProRule" id="PRU00498"/>
    </source>
</evidence>
<evidence type="ECO:0000269" key="3">
    <source>
    </source>
</evidence>
<evidence type="ECO:0000269" key="4">
    <source>
    </source>
</evidence>
<evidence type="ECO:0000303" key="5">
    <source>
    </source>
</evidence>
<evidence type="ECO:0000305" key="6"/>
<evidence type="ECO:0000305" key="7">
    <source>
    </source>
</evidence>
<evidence type="ECO:0000312" key="8">
    <source>
        <dbReference type="Proteomes" id="UP000001940"/>
    </source>
</evidence>
<evidence type="ECO:0000312" key="9">
    <source>
        <dbReference type="WormBase" id="T06D8.7"/>
    </source>
</evidence>
<dbReference type="EMBL" id="BX284602">
    <property type="protein sequence ID" value="CAA88970.1"/>
    <property type="molecule type" value="Genomic_DNA"/>
</dbReference>
<dbReference type="PIR" id="T24580">
    <property type="entry name" value="T24580"/>
</dbReference>
<dbReference type="RefSeq" id="NP_496404.1">
    <property type="nucleotide sequence ID" value="NM_064003.7"/>
</dbReference>
<dbReference type="FunCoup" id="Q22252">
    <property type="interactions" value="1222"/>
</dbReference>
<dbReference type="STRING" id="6239.T06D8.7.1"/>
<dbReference type="GlyCosmos" id="Q22252">
    <property type="glycosylation" value="2 sites, No reported glycans"/>
</dbReference>
<dbReference type="PaxDb" id="6239-T06D8.7"/>
<dbReference type="PeptideAtlas" id="Q22252"/>
<dbReference type="EnsemblMetazoa" id="T06D8.7.1">
    <property type="protein sequence ID" value="T06D8.7.1"/>
    <property type="gene ID" value="WBGene00011528"/>
</dbReference>
<dbReference type="GeneID" id="174714"/>
<dbReference type="KEGG" id="cel:CELE_T06D8.7"/>
<dbReference type="UCSC" id="T06D8.7.1">
    <property type="organism name" value="c. elegans"/>
</dbReference>
<dbReference type="AGR" id="WB:WBGene00011528"/>
<dbReference type="CTD" id="174714"/>
<dbReference type="WormBase" id="T06D8.7">
    <property type="protein sequence ID" value="CE02328"/>
    <property type="gene ID" value="WBGene00011528"/>
    <property type="gene designation" value="fndc-1"/>
</dbReference>
<dbReference type="eggNOG" id="KOG4099">
    <property type="taxonomic scope" value="Eukaryota"/>
</dbReference>
<dbReference type="GeneTree" id="ENSGT00940000174663"/>
<dbReference type="HOGENOM" id="CLU_1807901_0_0_1"/>
<dbReference type="InParanoid" id="Q22252"/>
<dbReference type="OMA" id="EYRWILG"/>
<dbReference type="OrthoDB" id="163794at2759"/>
<dbReference type="PhylomeDB" id="Q22252"/>
<dbReference type="Reactome" id="R-CEL-8934903">
    <property type="pathway name" value="Receptor Mediated Mitophagy"/>
</dbReference>
<dbReference type="PRO" id="PR:Q22252"/>
<dbReference type="Proteomes" id="UP000001940">
    <property type="component" value="Chromosome II"/>
</dbReference>
<dbReference type="Bgee" id="WBGene00011528">
    <property type="expression patterns" value="Expressed in embryo and 4 other cell types or tissues"/>
</dbReference>
<dbReference type="GO" id="GO:0005741">
    <property type="term" value="C:mitochondrial outer membrane"/>
    <property type="evidence" value="ECO:0000318"/>
    <property type="project" value="GO_Central"/>
</dbReference>
<dbReference type="GO" id="GO:0000422">
    <property type="term" value="P:autophagy of mitochondrion"/>
    <property type="evidence" value="ECO:0000318"/>
    <property type="project" value="GO_Central"/>
</dbReference>
<dbReference type="GO" id="GO:0000423">
    <property type="term" value="P:mitophagy"/>
    <property type="evidence" value="ECO:0000315"/>
    <property type="project" value="UniProtKB"/>
</dbReference>
<dbReference type="InterPro" id="IPR007014">
    <property type="entry name" value="FUN14"/>
</dbReference>
<dbReference type="PANTHER" id="PTHR21346">
    <property type="entry name" value="FUN14 DOMAIN CONTAINING"/>
    <property type="match status" value="1"/>
</dbReference>
<dbReference type="PANTHER" id="PTHR21346:SF0">
    <property type="entry name" value="RE45833P"/>
    <property type="match status" value="1"/>
</dbReference>
<dbReference type="Pfam" id="PF04930">
    <property type="entry name" value="FUN14"/>
    <property type="match status" value="1"/>
</dbReference>